<feature type="chain" id="PRO_0000075435" description="Transposase for insertion sequence element IS257 in transposon Tn4003">
    <location>
        <begin position="1"/>
        <end position="224"/>
    </location>
</feature>
<feature type="domain" description="Integrase catalytic" evidence="2">
    <location>
        <begin position="73"/>
        <end position="222"/>
    </location>
</feature>
<feature type="DNA-binding region" description="H-T-H motif" evidence="1">
    <location>
        <begin position="33"/>
        <end position="52"/>
    </location>
</feature>
<organism>
    <name type="scientific">Staphylococcus aureus</name>
    <dbReference type="NCBI Taxonomy" id="1280"/>
    <lineage>
        <taxon>Bacteria</taxon>
        <taxon>Bacillati</taxon>
        <taxon>Bacillota</taxon>
        <taxon>Bacilli</taxon>
        <taxon>Bacillales</taxon>
        <taxon>Staphylococcaceae</taxon>
        <taxon>Staphylococcus</taxon>
    </lineage>
</organism>
<reference key="1">
    <citation type="journal article" date="1989" name="Mol. Microbiol.">
        <title>Trimethoprim resistance transposon Tn4003 from Staphylococcus aureus encodes genes for a dihydrofolate reductase and thymidylate synthetase flanked by three copies of IS257.</title>
        <authorList>
            <person name="Rouch D.A."/>
            <person name="Messeroti L.J."/>
            <person name="Loo L.S.L."/>
            <person name="Jackson C.A."/>
            <person name="Skurray R.A."/>
        </authorList>
    </citation>
    <scope>NUCLEOTIDE SEQUENCE [GENOMIC DNA]</scope>
    <source>
        <plasmid>pSK1</plasmid>
        <transposon>Tn4003</transposon>
    </source>
</reference>
<reference key="2">
    <citation type="journal article" date="1990" name="FEBS Lett.">
        <title>Identical genes for trimethoprim-resistant dihydrofolate reductase from Staphylococcus aureus in Australia and central Europe.</title>
        <authorList>
            <person name="Burdeska A."/>
            <person name="Ott M."/>
            <person name="Bannwarth W."/>
            <person name="Then R.L."/>
        </authorList>
    </citation>
    <scope>NUCLEOTIDE SEQUENCE [GENOMIC DNA] OF 209-224</scope>
    <source>
        <strain>157/4696</strain>
        <plasmid>pABU1</plasmid>
    </source>
</reference>
<reference key="3">
    <citation type="submission" date="2001-07" db="EMBL/GenBank/DDBJ databases">
        <title>Cloning and sequencing of fusB, a plasmid-encoded fusidic acid-resistance determinant.</title>
        <authorList>
            <person name="O'Neill A.J."/>
            <person name="Chopra I."/>
        </authorList>
    </citation>
    <scope>NUCLEOTIDE SEQUENCE [GENOMIC DNA] OF 209-224</scope>
    <source>
        <plasmid>pUB101</plasmid>
    </source>
</reference>
<evidence type="ECO:0000255" key="1"/>
<evidence type="ECO:0000255" key="2">
    <source>
        <dbReference type="PROSITE-ProRule" id="PRU00457"/>
    </source>
</evidence>
<sequence>MNYFRYKQFNKDVITVAVGYYLRYALSYRDISEILRGRGVNVHHSTVYRWVQEYAPILYQIWKKKHKKAYYKWRIDETYIKIKGKWSYLYRAIDAEGHTLDIWLRKQRDNHSAYAFIKRLIKQFGKPQKVITDQAPSTKVAMAKVIKAFKLKPDCHCTSKYLNNLIEQDHRHIKVRKTRYQSINTAKNTLKGIECIYALYKKNRRSLQIYGFSPCHEISIMLAS</sequence>
<geneLocation type="plasmid">
    <name>pSK1</name>
</geneLocation>
<geneLocation type="plasmid">
    <name>pABU1</name>
</geneLocation>
<geneLocation type="plasmid">
    <name>pUB101</name>
</geneLocation>
<keyword id="KW-0233">DNA recombination</keyword>
<keyword id="KW-0238">DNA-binding</keyword>
<keyword id="KW-0614">Plasmid</keyword>
<keyword id="KW-0814">Transposable element</keyword>
<keyword id="KW-0815">Transposition</keyword>
<name>T257_STAAU</name>
<protein>
    <recommendedName>
        <fullName>Transposase for insertion sequence element IS257 in transposon Tn4003</fullName>
    </recommendedName>
</protein>
<comment type="function">
    <text>Involved in the transposition of the insertion sequence.</text>
</comment>
<proteinExistence type="predicted"/>
<dbReference type="EMBL" id="X13290">
    <property type="protein sequence ID" value="CAA31652.1"/>
    <property type="molecule type" value="Genomic_DNA"/>
</dbReference>
<dbReference type="EMBL" id="X13290">
    <property type="protein sequence ID" value="CAA31647.1"/>
    <property type="molecule type" value="Genomic_DNA"/>
</dbReference>
<dbReference type="EMBL" id="Y07536">
    <property type="protein sequence ID" value="CAA68826.1"/>
    <property type="molecule type" value="Genomic_DNA"/>
</dbReference>
<dbReference type="EMBL" id="AY047358">
    <property type="protein sequence ID" value="AAL12237.1"/>
    <property type="molecule type" value="Genomic_DNA"/>
</dbReference>
<dbReference type="PIR" id="S04162">
    <property type="entry name" value="S04162"/>
</dbReference>
<dbReference type="RefSeq" id="NP_863622.1">
    <property type="nucleotide sequence ID" value="NC_005024.1"/>
</dbReference>
<dbReference type="RefSeq" id="NP_877985.1">
    <property type="nucleotide sequence ID" value="NC_005054.1"/>
</dbReference>
<dbReference type="RefSeq" id="WP_001106019.1">
    <property type="nucleotide sequence ID" value="NZ_WKHE01000090.1"/>
</dbReference>
<dbReference type="RefSeq" id="YP_002790917.1">
    <property type="nucleotide sequence ID" value="NC_012547.1"/>
</dbReference>
<dbReference type="RefSeq" id="YP_002790945.1">
    <property type="nucleotide sequence ID" value="NC_012547.1"/>
</dbReference>
<dbReference type="RefSeq" id="YP_003813113.1">
    <property type="nucleotide sequence ID" value="NC_014369.1"/>
</dbReference>
<dbReference type="RefSeq" id="YP_003813118.1">
    <property type="nucleotide sequence ID" value="NC_014369.1"/>
</dbReference>
<dbReference type="RefSeq" id="YP_006937650.1">
    <property type="nucleotide sequence ID" value="NC_013320.1"/>
</dbReference>
<dbReference type="RefSeq" id="YP_006937664.1">
    <property type="nucleotide sequence ID" value="NC_013320.1"/>
</dbReference>
<dbReference type="RefSeq" id="YP_006937706.1">
    <property type="nucleotide sequence ID" value="NC_013321.1"/>
</dbReference>
<dbReference type="RefSeq" id="YP_006938352.1">
    <property type="nucleotide sequence ID" value="NC_013338.1"/>
</dbReference>
<dbReference type="RefSeq" id="YP_006938378.1">
    <property type="nucleotide sequence ID" value="NC_013339.1"/>
</dbReference>
<dbReference type="RefSeq" id="YP_006938493.1">
    <property type="nucleotide sequence ID" value="NC_013342.1"/>
</dbReference>
<dbReference type="RefSeq" id="YP_006938519.1">
    <property type="nucleotide sequence ID" value="NC_013343.1"/>
</dbReference>
<dbReference type="RefSeq" id="YP_006938580.1">
    <property type="nucleotide sequence ID" value="NC_013344.1"/>
</dbReference>
<dbReference type="SMR" id="P14506"/>
<dbReference type="OMA" id="WVQHYAP"/>
<dbReference type="GO" id="GO:0003677">
    <property type="term" value="F:DNA binding"/>
    <property type="evidence" value="ECO:0007669"/>
    <property type="project" value="UniProtKB-KW"/>
</dbReference>
<dbReference type="GO" id="GO:0015074">
    <property type="term" value="P:DNA integration"/>
    <property type="evidence" value="ECO:0007669"/>
    <property type="project" value="InterPro"/>
</dbReference>
<dbReference type="GO" id="GO:0006310">
    <property type="term" value="P:DNA recombination"/>
    <property type="evidence" value="ECO:0007669"/>
    <property type="project" value="UniProtKB-KW"/>
</dbReference>
<dbReference type="GO" id="GO:0032196">
    <property type="term" value="P:transposition"/>
    <property type="evidence" value="ECO:0007669"/>
    <property type="project" value="UniProtKB-KW"/>
</dbReference>
<dbReference type="Gene3D" id="3.30.420.10">
    <property type="entry name" value="Ribonuclease H-like superfamily/Ribonuclease H"/>
    <property type="match status" value="1"/>
</dbReference>
<dbReference type="InterPro" id="IPR032874">
    <property type="entry name" value="DDE_dom"/>
</dbReference>
<dbReference type="InterPro" id="IPR001584">
    <property type="entry name" value="Integrase_cat-core"/>
</dbReference>
<dbReference type="InterPro" id="IPR052183">
    <property type="entry name" value="IS_Transposase"/>
</dbReference>
<dbReference type="InterPro" id="IPR012337">
    <property type="entry name" value="RNaseH-like_sf"/>
</dbReference>
<dbReference type="InterPro" id="IPR036397">
    <property type="entry name" value="RNaseH_sf"/>
</dbReference>
<dbReference type="InterPro" id="IPR047930">
    <property type="entry name" value="Transpos_IS6"/>
</dbReference>
<dbReference type="NCBIfam" id="NF033587">
    <property type="entry name" value="transpos_IS6"/>
    <property type="match status" value="1"/>
</dbReference>
<dbReference type="PANTHER" id="PTHR35528">
    <property type="entry name" value="BLL1675 PROTEIN"/>
    <property type="match status" value="1"/>
</dbReference>
<dbReference type="PANTHER" id="PTHR35528:SF3">
    <property type="entry name" value="BLL1675 PROTEIN"/>
    <property type="match status" value="1"/>
</dbReference>
<dbReference type="Pfam" id="PF13610">
    <property type="entry name" value="DDE_Tnp_IS240"/>
    <property type="match status" value="1"/>
</dbReference>
<dbReference type="SUPFAM" id="SSF53098">
    <property type="entry name" value="Ribonuclease H-like"/>
    <property type="match status" value="1"/>
</dbReference>
<dbReference type="PROSITE" id="PS50994">
    <property type="entry name" value="INTEGRASE"/>
    <property type="match status" value="1"/>
</dbReference>
<accession>P14506</accession>
<accession>Q99374</accession>